<gene>
    <name type="ordered locus">SP_1873</name>
</gene>
<name>YIDD_STRPN</name>
<comment type="function">
    <text evidence="1">Could be involved in insertion of integral membrane proteins into the membrane.</text>
</comment>
<comment type="interaction">
    <interactant intactId="EBI-6473712">
        <id>Q97NX8</id>
    </interactant>
    <interactant intactId="EBI-6473708">
        <id>Q97P97</id>
        <label>rsfS</label>
    </interactant>
    <organismsDiffer>false</organismsDiffer>
    <experiments>4</experiments>
</comment>
<comment type="subcellular location">
    <subcellularLocation>
        <location evidence="1">Cell membrane</location>
        <topology evidence="1">Peripheral membrane protein</topology>
        <orientation evidence="1">Cytoplasmic side</orientation>
    </subcellularLocation>
</comment>
<comment type="similarity">
    <text evidence="1">Belongs to the UPF0161 family.</text>
</comment>
<keyword id="KW-1003">Cell membrane</keyword>
<keyword id="KW-0472">Membrane</keyword>
<keyword id="KW-1185">Reference proteome</keyword>
<organism>
    <name type="scientific">Streptococcus pneumoniae serotype 4 (strain ATCC BAA-334 / TIGR4)</name>
    <dbReference type="NCBI Taxonomy" id="170187"/>
    <lineage>
        <taxon>Bacteria</taxon>
        <taxon>Bacillati</taxon>
        <taxon>Bacillota</taxon>
        <taxon>Bacilli</taxon>
        <taxon>Lactobacillales</taxon>
        <taxon>Streptococcaceae</taxon>
        <taxon>Streptococcus</taxon>
    </lineage>
</organism>
<reference key="1">
    <citation type="journal article" date="2001" name="Science">
        <title>Complete genome sequence of a virulent isolate of Streptococcus pneumoniae.</title>
        <authorList>
            <person name="Tettelin H."/>
            <person name="Nelson K.E."/>
            <person name="Paulsen I.T."/>
            <person name="Eisen J.A."/>
            <person name="Read T.D."/>
            <person name="Peterson S.N."/>
            <person name="Heidelberg J.F."/>
            <person name="DeBoy R.T."/>
            <person name="Haft D.H."/>
            <person name="Dodson R.J."/>
            <person name="Durkin A.S."/>
            <person name="Gwinn M.L."/>
            <person name="Kolonay J.F."/>
            <person name="Nelson W.C."/>
            <person name="Peterson J.D."/>
            <person name="Umayam L.A."/>
            <person name="White O."/>
            <person name="Salzberg S.L."/>
            <person name="Lewis M.R."/>
            <person name="Radune D."/>
            <person name="Holtzapple E.K."/>
            <person name="Khouri H.M."/>
            <person name="Wolf A.M."/>
            <person name="Utterback T.R."/>
            <person name="Hansen C.L."/>
            <person name="McDonald L.A."/>
            <person name="Feldblyum T.V."/>
            <person name="Angiuoli S.V."/>
            <person name="Dickinson T."/>
            <person name="Hickey E.K."/>
            <person name="Holt I.E."/>
            <person name="Loftus B.J."/>
            <person name="Yang F."/>
            <person name="Smith H.O."/>
            <person name="Venter J.C."/>
            <person name="Dougherty B.A."/>
            <person name="Morrison D.A."/>
            <person name="Hollingshead S.K."/>
            <person name="Fraser C.M."/>
        </authorList>
    </citation>
    <scope>NUCLEOTIDE SEQUENCE [LARGE SCALE GENOMIC DNA]</scope>
    <source>
        <strain>ATCC BAA-334 / TIGR4</strain>
    </source>
</reference>
<evidence type="ECO:0000255" key="1">
    <source>
        <dbReference type="HAMAP-Rule" id="MF_00386"/>
    </source>
</evidence>
<evidence type="ECO:0000256" key="2">
    <source>
        <dbReference type="SAM" id="MobiDB-lite"/>
    </source>
</evidence>
<dbReference type="EMBL" id="AE005672">
    <property type="protein sequence ID" value="AAK75945.1"/>
    <property type="molecule type" value="Genomic_DNA"/>
</dbReference>
<dbReference type="PIR" id="H95218">
    <property type="entry name" value="H95218"/>
</dbReference>
<dbReference type="IntAct" id="Q97NX8">
    <property type="interactions" value="1"/>
</dbReference>
<dbReference type="PaxDb" id="170187-SP_1873"/>
<dbReference type="DNASU" id="930961"/>
<dbReference type="EnsemblBacteria" id="AAK75945">
    <property type="protein sequence ID" value="AAK75945"/>
    <property type="gene ID" value="SP_1873"/>
</dbReference>
<dbReference type="KEGG" id="spn:SP_1873"/>
<dbReference type="eggNOG" id="COG0759">
    <property type="taxonomic scope" value="Bacteria"/>
</dbReference>
<dbReference type="PhylomeDB" id="Q97NX8"/>
<dbReference type="BioCyc" id="SPNE170187:G1FZB-1903-MONOMER"/>
<dbReference type="Proteomes" id="UP000000585">
    <property type="component" value="Chromosome"/>
</dbReference>
<dbReference type="GO" id="GO:0005886">
    <property type="term" value="C:plasma membrane"/>
    <property type="evidence" value="ECO:0007669"/>
    <property type="project" value="UniProtKB-SubCell"/>
</dbReference>
<dbReference type="HAMAP" id="MF_00386">
    <property type="entry name" value="UPF0161_YidD"/>
    <property type="match status" value="1"/>
</dbReference>
<dbReference type="InterPro" id="IPR002696">
    <property type="entry name" value="Membr_insert_effic_factor_YidD"/>
</dbReference>
<dbReference type="NCBIfam" id="TIGR00278">
    <property type="entry name" value="membrane protein insertion efficiency factor YidD"/>
    <property type="match status" value="1"/>
</dbReference>
<dbReference type="PANTHER" id="PTHR33383">
    <property type="entry name" value="MEMBRANE PROTEIN INSERTION EFFICIENCY FACTOR-RELATED"/>
    <property type="match status" value="1"/>
</dbReference>
<dbReference type="PANTHER" id="PTHR33383:SF1">
    <property type="entry name" value="MEMBRANE PROTEIN INSERTION EFFICIENCY FACTOR-RELATED"/>
    <property type="match status" value="1"/>
</dbReference>
<dbReference type="Pfam" id="PF01809">
    <property type="entry name" value="YidD"/>
    <property type="match status" value="1"/>
</dbReference>
<dbReference type="SMART" id="SM01234">
    <property type="entry name" value="Haemolytic"/>
    <property type="match status" value="1"/>
</dbReference>
<protein>
    <recommendedName>
        <fullName evidence="1">Putative membrane protein insertion efficiency factor</fullName>
    </recommendedName>
</protein>
<sequence length="80" mass="9339">MKRILIAPVRFYQRFISPVFPPSCRFELTCSNYMIQAIEKHGFKGVLMGLARILRCHPWSKTGKDPVPDRFSLKRNQEGE</sequence>
<accession>Q97NX8</accession>
<proteinExistence type="evidence at protein level"/>
<feature type="chain" id="PRO_0000171881" description="Putative membrane protein insertion efficiency factor">
    <location>
        <begin position="1"/>
        <end position="80"/>
    </location>
</feature>
<feature type="region of interest" description="Disordered" evidence="2">
    <location>
        <begin position="60"/>
        <end position="80"/>
    </location>
</feature>
<feature type="compositionally biased region" description="Basic and acidic residues" evidence="2">
    <location>
        <begin position="62"/>
        <end position="80"/>
    </location>
</feature>